<comment type="similarity">
    <text evidence="2">Belongs to the CbbQ/NirQ/NorQ/GpvN family.</text>
</comment>
<comment type="sequence caution" evidence="2">
    <conflict type="erroneous initiation">
        <sequence resource="EMBL-CDS" id="BAE18486"/>
    </conflict>
</comment>
<sequence length="263" mass="29368">MANTNYINRDETVFNDAQSLMQLNKNILLKGPTGSGKTKLAETLSETMNRPMHQINCSVDLDAESLLGFKTIQTNENGSQEIVFIDGPVIKAMKEGHILYIDEINMAKPETLPILNGVLDYRRKLTNPFTGEVVNAAPGFNVIAAINVGYIGTLPMNEALKNRFVVIQVDYIDGDILSDVIKQQSQLSDDIMIQKIIKFNEDLRTMTKQGQISEEAASIRALIDLSDLATIMPIERAIQRTIIDKLEDEREQQAILNAVELNF</sequence>
<reference key="1">
    <citation type="journal article" date="2005" name="Proc. Natl. Acad. Sci. U.S.A.">
        <title>Whole genome sequence of Staphylococcus saprophyticus reveals the pathogenesis of uncomplicated urinary tract infection.</title>
        <authorList>
            <person name="Kuroda M."/>
            <person name="Yamashita A."/>
            <person name="Hirakawa H."/>
            <person name="Kumano M."/>
            <person name="Morikawa K."/>
            <person name="Higashide M."/>
            <person name="Maruyama A."/>
            <person name="Inose Y."/>
            <person name="Matoba K."/>
            <person name="Toh H."/>
            <person name="Kuhara S."/>
            <person name="Hattori M."/>
            <person name="Ohta T."/>
        </authorList>
    </citation>
    <scope>NUCLEOTIDE SEQUENCE [LARGE SCALE GENOMIC DNA]</scope>
    <source>
        <strain>ATCC 15305 / DSM 20229 / NCIMB 8711 / NCTC 7292 / S-41</strain>
    </source>
</reference>
<dbReference type="EMBL" id="AP008934">
    <property type="protein sequence ID" value="BAE18486.1"/>
    <property type="status" value="ALT_INIT"/>
    <property type="molecule type" value="Genomic_DNA"/>
</dbReference>
<dbReference type="RefSeq" id="WP_002483311.1">
    <property type="nucleotide sequence ID" value="NZ_MTGA01000038.1"/>
</dbReference>
<dbReference type="SMR" id="Q49XL1"/>
<dbReference type="GeneID" id="3616679"/>
<dbReference type="KEGG" id="ssp:SSP1341"/>
<dbReference type="PATRIC" id="fig|342451.11.peg.1345"/>
<dbReference type="eggNOG" id="COG0714">
    <property type="taxonomic scope" value="Bacteria"/>
</dbReference>
<dbReference type="HOGENOM" id="CLU_080347_0_0_9"/>
<dbReference type="OrthoDB" id="9808317at2"/>
<dbReference type="Proteomes" id="UP000006371">
    <property type="component" value="Chromosome"/>
</dbReference>
<dbReference type="GO" id="GO:0005524">
    <property type="term" value="F:ATP binding"/>
    <property type="evidence" value="ECO:0007669"/>
    <property type="project" value="UniProtKB-KW"/>
</dbReference>
<dbReference type="GO" id="GO:0016887">
    <property type="term" value="F:ATP hydrolysis activity"/>
    <property type="evidence" value="ECO:0007669"/>
    <property type="project" value="InterPro"/>
</dbReference>
<dbReference type="CDD" id="cd00009">
    <property type="entry name" value="AAA"/>
    <property type="match status" value="1"/>
</dbReference>
<dbReference type="Gene3D" id="3.40.50.300">
    <property type="entry name" value="P-loop containing nucleotide triphosphate hydrolases"/>
    <property type="match status" value="1"/>
</dbReference>
<dbReference type="InterPro" id="IPR003593">
    <property type="entry name" value="AAA+_ATPase"/>
</dbReference>
<dbReference type="InterPro" id="IPR011704">
    <property type="entry name" value="ATPase_dyneun-rel_AAA"/>
</dbReference>
<dbReference type="InterPro" id="IPR050764">
    <property type="entry name" value="CbbQ/NirQ/NorQ/GpvN"/>
</dbReference>
<dbReference type="InterPro" id="IPR013615">
    <property type="entry name" value="CbbQ_C"/>
</dbReference>
<dbReference type="InterPro" id="IPR001270">
    <property type="entry name" value="ClpA/B"/>
</dbReference>
<dbReference type="InterPro" id="IPR027417">
    <property type="entry name" value="P-loop_NTPase"/>
</dbReference>
<dbReference type="PANTHER" id="PTHR42759:SF1">
    <property type="entry name" value="MAGNESIUM-CHELATASE SUBUNIT CHLD"/>
    <property type="match status" value="1"/>
</dbReference>
<dbReference type="PANTHER" id="PTHR42759">
    <property type="entry name" value="MOXR FAMILY PROTEIN"/>
    <property type="match status" value="1"/>
</dbReference>
<dbReference type="Pfam" id="PF07728">
    <property type="entry name" value="AAA_5"/>
    <property type="match status" value="1"/>
</dbReference>
<dbReference type="Pfam" id="PF08406">
    <property type="entry name" value="CbbQ_C"/>
    <property type="match status" value="1"/>
</dbReference>
<dbReference type="PRINTS" id="PR00300">
    <property type="entry name" value="CLPPROTEASEA"/>
</dbReference>
<dbReference type="SMART" id="SM00382">
    <property type="entry name" value="AAA"/>
    <property type="match status" value="1"/>
</dbReference>
<dbReference type="SUPFAM" id="SSF52540">
    <property type="entry name" value="P-loop containing nucleoside triphosphate hydrolases"/>
    <property type="match status" value="1"/>
</dbReference>
<name>Y1341_STAS1</name>
<accession>Q49XL1</accession>
<protein>
    <recommendedName>
        <fullName>Uncharacterized protein SSP1341</fullName>
    </recommendedName>
</protein>
<feature type="chain" id="PRO_0000284817" description="Uncharacterized protein SSP1341">
    <location>
        <begin position="1"/>
        <end position="263"/>
    </location>
</feature>
<feature type="binding site" evidence="1">
    <location>
        <begin position="31"/>
        <end position="38"/>
    </location>
    <ligand>
        <name>ATP</name>
        <dbReference type="ChEBI" id="CHEBI:30616"/>
    </ligand>
</feature>
<evidence type="ECO:0000255" key="1"/>
<evidence type="ECO:0000305" key="2"/>
<proteinExistence type="inferred from homology"/>
<keyword id="KW-0067">ATP-binding</keyword>
<keyword id="KW-0547">Nucleotide-binding</keyword>
<keyword id="KW-1185">Reference proteome</keyword>
<gene>
    <name type="ordered locus">SSP1341</name>
</gene>
<organism>
    <name type="scientific">Staphylococcus saprophyticus subsp. saprophyticus (strain ATCC 15305 / DSM 20229 / NCIMB 8711 / NCTC 7292 / S-41)</name>
    <dbReference type="NCBI Taxonomy" id="342451"/>
    <lineage>
        <taxon>Bacteria</taxon>
        <taxon>Bacillati</taxon>
        <taxon>Bacillota</taxon>
        <taxon>Bacilli</taxon>
        <taxon>Bacillales</taxon>
        <taxon>Staphylococcaceae</taxon>
        <taxon>Staphylococcus</taxon>
    </lineage>
</organism>